<dbReference type="EC" id="4.1.99.17" evidence="1"/>
<dbReference type="EMBL" id="CP000001">
    <property type="protein sequence ID" value="AAU15359.1"/>
    <property type="molecule type" value="Genomic_DNA"/>
</dbReference>
<dbReference type="RefSeq" id="WP_000814466.1">
    <property type="nucleotide sequence ID" value="NZ_CP009968.1"/>
</dbReference>
<dbReference type="SMR" id="Q631C7"/>
<dbReference type="KEGG" id="bcz:BCE33L4920"/>
<dbReference type="PATRIC" id="fig|288681.22.peg.432"/>
<dbReference type="UniPathway" id="UPA00060"/>
<dbReference type="Proteomes" id="UP000002612">
    <property type="component" value="Chromosome"/>
</dbReference>
<dbReference type="GO" id="GO:0005829">
    <property type="term" value="C:cytosol"/>
    <property type="evidence" value="ECO:0007669"/>
    <property type="project" value="TreeGrafter"/>
</dbReference>
<dbReference type="GO" id="GO:0051539">
    <property type="term" value="F:4 iron, 4 sulfur cluster binding"/>
    <property type="evidence" value="ECO:0007669"/>
    <property type="project" value="UniProtKB-KW"/>
</dbReference>
<dbReference type="GO" id="GO:0016830">
    <property type="term" value="F:carbon-carbon lyase activity"/>
    <property type="evidence" value="ECO:0007669"/>
    <property type="project" value="InterPro"/>
</dbReference>
<dbReference type="GO" id="GO:0008270">
    <property type="term" value="F:zinc ion binding"/>
    <property type="evidence" value="ECO:0007669"/>
    <property type="project" value="UniProtKB-UniRule"/>
</dbReference>
<dbReference type="GO" id="GO:0009228">
    <property type="term" value="P:thiamine biosynthetic process"/>
    <property type="evidence" value="ECO:0007669"/>
    <property type="project" value="UniProtKB-KW"/>
</dbReference>
<dbReference type="GO" id="GO:0009229">
    <property type="term" value="P:thiamine diphosphate biosynthetic process"/>
    <property type="evidence" value="ECO:0007669"/>
    <property type="project" value="UniProtKB-UniRule"/>
</dbReference>
<dbReference type="FunFam" id="3.20.20.540:FF:000001">
    <property type="entry name" value="Phosphomethylpyrimidine synthase"/>
    <property type="match status" value="1"/>
</dbReference>
<dbReference type="Gene3D" id="6.10.250.620">
    <property type="match status" value="1"/>
</dbReference>
<dbReference type="Gene3D" id="3.20.20.540">
    <property type="entry name" value="Radical SAM ThiC family, central domain"/>
    <property type="match status" value="1"/>
</dbReference>
<dbReference type="HAMAP" id="MF_00089">
    <property type="entry name" value="ThiC"/>
    <property type="match status" value="1"/>
</dbReference>
<dbReference type="InterPro" id="IPR037509">
    <property type="entry name" value="ThiC"/>
</dbReference>
<dbReference type="InterPro" id="IPR025747">
    <property type="entry name" value="ThiC-associated_dom"/>
</dbReference>
<dbReference type="InterPro" id="IPR038521">
    <property type="entry name" value="ThiC/Bza_core_dom"/>
</dbReference>
<dbReference type="InterPro" id="IPR002817">
    <property type="entry name" value="ThiC/BzaA/B"/>
</dbReference>
<dbReference type="NCBIfam" id="NF006763">
    <property type="entry name" value="PRK09284.1"/>
    <property type="match status" value="1"/>
</dbReference>
<dbReference type="NCBIfam" id="NF009895">
    <property type="entry name" value="PRK13352.1"/>
    <property type="match status" value="1"/>
</dbReference>
<dbReference type="NCBIfam" id="TIGR00190">
    <property type="entry name" value="thiC"/>
    <property type="match status" value="1"/>
</dbReference>
<dbReference type="PANTHER" id="PTHR30557:SF1">
    <property type="entry name" value="PHOSPHOMETHYLPYRIMIDINE SYNTHASE, CHLOROPLASTIC"/>
    <property type="match status" value="1"/>
</dbReference>
<dbReference type="PANTHER" id="PTHR30557">
    <property type="entry name" value="THIAMINE BIOSYNTHESIS PROTEIN THIC"/>
    <property type="match status" value="1"/>
</dbReference>
<dbReference type="Pfam" id="PF13667">
    <property type="entry name" value="ThiC-associated"/>
    <property type="match status" value="1"/>
</dbReference>
<dbReference type="Pfam" id="PF01964">
    <property type="entry name" value="ThiC_Rad_SAM"/>
    <property type="match status" value="1"/>
</dbReference>
<dbReference type="SFLD" id="SFLDF00407">
    <property type="entry name" value="phosphomethylpyrimidine_syntha"/>
    <property type="match status" value="1"/>
</dbReference>
<dbReference type="SFLD" id="SFLDG01114">
    <property type="entry name" value="phosphomethylpyrimidine_syntha"/>
    <property type="match status" value="1"/>
</dbReference>
<dbReference type="SFLD" id="SFLDS00113">
    <property type="entry name" value="Radical_SAM_Phosphomethylpyrim"/>
    <property type="match status" value="1"/>
</dbReference>
<evidence type="ECO:0000255" key="1">
    <source>
        <dbReference type="HAMAP-Rule" id="MF_00089"/>
    </source>
</evidence>
<evidence type="ECO:0000256" key="2">
    <source>
        <dbReference type="SAM" id="MobiDB-lite"/>
    </source>
</evidence>
<feature type="chain" id="PRO_0000242237" description="Phosphomethylpyrimidine synthase">
    <location>
        <begin position="1"/>
        <end position="586"/>
    </location>
</feature>
<feature type="region of interest" description="Disordered" evidence="2">
    <location>
        <begin position="1"/>
        <end position="59"/>
    </location>
</feature>
<feature type="compositionally biased region" description="Basic and acidic residues" evidence="2">
    <location>
        <begin position="22"/>
        <end position="39"/>
    </location>
</feature>
<feature type="binding site" evidence="1">
    <location>
        <position position="193"/>
    </location>
    <ligand>
        <name>substrate</name>
    </ligand>
</feature>
<feature type="binding site" evidence="1">
    <location>
        <position position="222"/>
    </location>
    <ligand>
        <name>substrate</name>
    </ligand>
</feature>
<feature type="binding site" evidence="1">
    <location>
        <position position="251"/>
    </location>
    <ligand>
        <name>substrate</name>
    </ligand>
</feature>
<feature type="binding site" evidence="1">
    <location>
        <position position="287"/>
    </location>
    <ligand>
        <name>substrate</name>
    </ligand>
</feature>
<feature type="binding site" evidence="1">
    <location>
        <begin position="307"/>
        <end position="309"/>
    </location>
    <ligand>
        <name>substrate</name>
    </ligand>
</feature>
<feature type="binding site" evidence="1">
    <location>
        <begin position="348"/>
        <end position="351"/>
    </location>
    <ligand>
        <name>substrate</name>
    </ligand>
</feature>
<feature type="binding site" evidence="1">
    <location>
        <position position="387"/>
    </location>
    <ligand>
        <name>substrate</name>
    </ligand>
</feature>
<feature type="binding site" evidence="1">
    <location>
        <position position="391"/>
    </location>
    <ligand>
        <name>Zn(2+)</name>
        <dbReference type="ChEBI" id="CHEBI:29105"/>
    </ligand>
</feature>
<feature type="binding site" evidence="1">
    <location>
        <position position="414"/>
    </location>
    <ligand>
        <name>substrate</name>
    </ligand>
</feature>
<feature type="binding site" evidence="1">
    <location>
        <position position="455"/>
    </location>
    <ligand>
        <name>Zn(2+)</name>
        <dbReference type="ChEBI" id="CHEBI:29105"/>
    </ligand>
</feature>
<feature type="binding site" evidence="1">
    <location>
        <position position="535"/>
    </location>
    <ligand>
        <name>[4Fe-4S] cluster</name>
        <dbReference type="ChEBI" id="CHEBI:49883"/>
        <note>4Fe-4S-S-AdoMet</note>
    </ligand>
</feature>
<feature type="binding site" evidence="1">
    <location>
        <position position="538"/>
    </location>
    <ligand>
        <name>[4Fe-4S] cluster</name>
        <dbReference type="ChEBI" id="CHEBI:49883"/>
        <note>4Fe-4S-S-AdoMet</note>
    </ligand>
</feature>
<feature type="binding site" evidence="1">
    <location>
        <position position="543"/>
    </location>
    <ligand>
        <name>[4Fe-4S] cluster</name>
        <dbReference type="ChEBI" id="CHEBI:49883"/>
        <note>4Fe-4S-S-AdoMet</note>
    </ligand>
</feature>
<comment type="function">
    <text evidence="1">Catalyzes the synthesis of the hydroxymethylpyrimidine phosphate (HMP-P) moiety of thiamine from aminoimidazole ribotide (AIR) in a radical S-adenosyl-L-methionine (SAM)-dependent reaction.</text>
</comment>
<comment type="catalytic activity">
    <reaction evidence="1">
        <text>5-amino-1-(5-phospho-beta-D-ribosyl)imidazole + S-adenosyl-L-methionine = 4-amino-2-methyl-5-(phosphooxymethyl)pyrimidine + CO + 5'-deoxyadenosine + formate + L-methionine + 3 H(+)</text>
        <dbReference type="Rhea" id="RHEA:24840"/>
        <dbReference type="ChEBI" id="CHEBI:15378"/>
        <dbReference type="ChEBI" id="CHEBI:15740"/>
        <dbReference type="ChEBI" id="CHEBI:17245"/>
        <dbReference type="ChEBI" id="CHEBI:17319"/>
        <dbReference type="ChEBI" id="CHEBI:57844"/>
        <dbReference type="ChEBI" id="CHEBI:58354"/>
        <dbReference type="ChEBI" id="CHEBI:59789"/>
        <dbReference type="ChEBI" id="CHEBI:137981"/>
        <dbReference type="EC" id="4.1.99.17"/>
    </reaction>
</comment>
<comment type="cofactor">
    <cofactor evidence="1">
        <name>[4Fe-4S] cluster</name>
        <dbReference type="ChEBI" id="CHEBI:49883"/>
    </cofactor>
    <text evidence="1">Binds 1 [4Fe-4S] cluster per subunit. The cluster is coordinated with 3 cysteines and an exchangeable S-adenosyl-L-methionine.</text>
</comment>
<comment type="pathway">
    <text evidence="1">Cofactor biosynthesis; thiamine diphosphate biosynthesis.</text>
</comment>
<comment type="similarity">
    <text evidence="1">Belongs to the ThiC family.</text>
</comment>
<reference key="1">
    <citation type="journal article" date="2006" name="J. Bacteriol.">
        <title>Pathogenomic sequence analysis of Bacillus cereus and Bacillus thuringiensis isolates closely related to Bacillus anthracis.</title>
        <authorList>
            <person name="Han C.S."/>
            <person name="Xie G."/>
            <person name="Challacombe J.F."/>
            <person name="Altherr M.R."/>
            <person name="Bhotika S.S."/>
            <person name="Bruce D."/>
            <person name="Campbell C.S."/>
            <person name="Campbell M.L."/>
            <person name="Chen J."/>
            <person name="Chertkov O."/>
            <person name="Cleland C."/>
            <person name="Dimitrijevic M."/>
            <person name="Doggett N.A."/>
            <person name="Fawcett J.J."/>
            <person name="Glavina T."/>
            <person name="Goodwin L.A."/>
            <person name="Hill K.K."/>
            <person name="Hitchcock P."/>
            <person name="Jackson P.J."/>
            <person name="Keim P."/>
            <person name="Kewalramani A.R."/>
            <person name="Longmire J."/>
            <person name="Lucas S."/>
            <person name="Malfatti S."/>
            <person name="McMurry K."/>
            <person name="Meincke L.J."/>
            <person name="Misra M."/>
            <person name="Moseman B.L."/>
            <person name="Mundt M."/>
            <person name="Munk A.C."/>
            <person name="Okinaka R.T."/>
            <person name="Parson-Quintana B."/>
            <person name="Reilly L.P."/>
            <person name="Richardson P."/>
            <person name="Robinson D.L."/>
            <person name="Rubin E."/>
            <person name="Saunders E."/>
            <person name="Tapia R."/>
            <person name="Tesmer J.G."/>
            <person name="Thayer N."/>
            <person name="Thompson L.S."/>
            <person name="Tice H."/>
            <person name="Ticknor L.O."/>
            <person name="Wills P.L."/>
            <person name="Brettin T.S."/>
            <person name="Gilna P."/>
        </authorList>
    </citation>
    <scope>NUCLEOTIDE SEQUENCE [LARGE SCALE GENOMIC DNA]</scope>
    <source>
        <strain>ZK / E33L</strain>
    </source>
</reference>
<protein>
    <recommendedName>
        <fullName evidence="1">Phosphomethylpyrimidine synthase</fullName>
        <ecNumber evidence="1">4.1.99.17</ecNumber>
    </recommendedName>
    <alternativeName>
        <fullName evidence="1">Hydroxymethylpyrimidine phosphate synthase</fullName>
        <shortName evidence="1">HMP-P synthase</shortName>
        <shortName evidence="1">HMP-phosphate synthase</shortName>
        <shortName evidence="1">HMPP synthase</shortName>
    </alternativeName>
    <alternativeName>
        <fullName evidence="1">Thiamine biosynthesis protein ThiC</fullName>
    </alternativeName>
</protein>
<proteinExistence type="inferred from homology"/>
<keyword id="KW-0004">4Fe-4S</keyword>
<keyword id="KW-0408">Iron</keyword>
<keyword id="KW-0411">Iron-sulfur</keyword>
<keyword id="KW-0456">Lyase</keyword>
<keyword id="KW-0479">Metal-binding</keyword>
<keyword id="KW-0949">S-adenosyl-L-methionine</keyword>
<keyword id="KW-0784">Thiamine biosynthesis</keyword>
<keyword id="KW-0862">Zinc</keyword>
<name>THIC_BACCZ</name>
<accession>Q631C7</accession>
<organism>
    <name type="scientific">Bacillus cereus (strain ZK / E33L)</name>
    <dbReference type="NCBI Taxonomy" id="288681"/>
    <lineage>
        <taxon>Bacteria</taxon>
        <taxon>Bacillati</taxon>
        <taxon>Bacillota</taxon>
        <taxon>Bacilli</taxon>
        <taxon>Bacillales</taxon>
        <taxon>Bacillaceae</taxon>
        <taxon>Bacillus</taxon>
        <taxon>Bacillus cereus group</taxon>
    </lineage>
</organism>
<gene>
    <name evidence="1" type="primary">thiC</name>
    <name type="ordered locus">BCE33L4920</name>
</gene>
<sequence length="586" mass="65771">MKQSVSAEQIELKSSLPGSKKVYVDGPREGMKVPMREIEQSDTNGVPNPPIRVYDTSGPYTDPAYKVELEKGIPTPRHSWILERGDVEAYEGREVKPEDDGVKVASKHTPVFPQMDRKPLRAKQGANVTQMHYARNGIITSEMEYVAIREGVDPEFVRKEIAEGRAILPANINHPEAEPMIIGRNFHVKVNANIGNSAVSSSIAEEVEKMTWATRWGADTIMDLSTGKNIHTTREWIIRNAPVPVGTVPIYQALEKVNGIAEDLTWEVYRDTLIEQAEQGVDYFTIHAGVLLRYIPITAKRTTGIVSRGGSIMAQWCLFHHKENFLYTHFEEICEIMKQYDVSFSLGDGLRPGSIADANDEAQFSELETLGELTKIAWKHDVQVMIEGPGHVPMHLIKENMEKELDICQGAPFYTLGPLTTDIAPGYDHITSAIGAAMIGWFGTAMLCYVTPKEHLGLPNKDDVREGVITYKIAAHAADLAKGHKTAHQRDDALSKARFEFRWRDQFNLSLDPERAMEYHDETLPAEGAKTAHFCSMCGPKFCSMRISHDIREYAKENDLETTEAIEKGMKEKAKEFKETGSHLYQ</sequence>